<proteinExistence type="inferred from homology"/>
<accession>Q09T00</accession>
<reference key="1">
    <citation type="journal article" date="2006" name="J. Virol.">
        <title>Human T-cell lymphotropic virus type 3: complete nucleotide sequence and characterization of the human tax3 protein.</title>
        <authorList>
            <person name="Calattini S."/>
            <person name="Chevalier S.A."/>
            <person name="Duprez R."/>
            <person name="Afonso P."/>
            <person name="Froment A."/>
            <person name="Gessain A."/>
            <person name="Mahieux R."/>
        </authorList>
    </citation>
    <scope>NUCLEOTIDE SEQUENCE [GENOMIC DNA]</scope>
</reference>
<keyword id="KW-0167">Capsid protein</keyword>
<keyword id="KW-0945">Host-virus interaction</keyword>
<keyword id="KW-0449">Lipoprotein</keyword>
<keyword id="KW-0479">Metal-binding</keyword>
<keyword id="KW-0519">Myristate</keyword>
<keyword id="KW-0597">Phosphoprotein</keyword>
<keyword id="KW-0677">Repeat</keyword>
<keyword id="KW-0688">Ribosomal frameshifting</keyword>
<keyword id="KW-0543">Viral nucleoprotein</keyword>
<keyword id="KW-0946">Virion</keyword>
<keyword id="KW-0862">Zinc</keyword>
<keyword id="KW-0863">Zinc-finger</keyword>
<comment type="function">
    <text evidence="1">Matrix protein p19 targets Gag, Gag-Pro and Gag-Pro-Pol polyproteins to the plasma membrane via a multipartite membrane binding signal, that includes its myristoylated N-terminus. Also mediates nuclear localization of the preintegration complex (By similarity).</text>
</comment>
<comment type="function">
    <text evidence="1">Capsid protein p24 forms the conical core of the virus that encapsulates the genomic RNA-nucleocapsid complex.</text>
</comment>
<comment type="function">
    <text evidence="1">Nucleocapsid protein p15 is involved in the packaging and encapsidation of two copies of the genome.</text>
</comment>
<comment type="subunit">
    <text evidence="1">Interacts with human TSG101. This interaction is essential for budding and release of viral particles (By similarity).</text>
</comment>
<comment type="subcellular location">
    <molecule>Matrix protein p19</molecule>
    <subcellularLocation>
        <location evidence="4">Virion</location>
    </subcellularLocation>
</comment>
<comment type="subcellular location">
    <molecule>Capsid protein p24</molecule>
    <subcellularLocation>
        <location evidence="4">Virion</location>
    </subcellularLocation>
</comment>
<comment type="subcellular location">
    <molecule>Nucleocapsid protein p15-gag</molecule>
    <subcellularLocation>
        <location evidence="4">Virion</location>
    </subcellularLocation>
</comment>
<comment type="alternative products">
    <event type="ribosomal frameshifting"/>
    <isoform>
        <id>Q09T00-1</id>
        <name>Gag polyprotein</name>
        <sequence type="displayed"/>
    </isoform>
    <isoform>
        <id>Q09SZ9-1</id>
        <name>Gag-Pro polyprotein</name>
        <sequence type="external"/>
    </isoform>
    <isoform>
        <id>Q4U0X6-1</id>
        <name>Gag-Pol polyprotein</name>
        <sequence type="external"/>
    </isoform>
    <text>This strategy of translation probably allows the virus to modulate the quantity of each viral protein.</text>
</comment>
<comment type="domain">
    <text evidence="1">Late-budding domains (L domains) are short sequence motifs essential for viral particle release. They can occur individually or in close proximity within structural proteins. They interacts with sorting cellular proteins of the multivesicular body (MVB) pathway. Most of these proteins are class E vacuolar protein sorting factors belonging to ESCRT-I, ESCRT-II or ESCRT-III complexes. Matrix protein p19 contains two L domains: a PTAP/PSAP motif which interacts with the UEV domain of TSG101, and a PPXY motif which binds to the WW domains of HECT (homologous to E6-AP C-terminus) E3 ubiquitin ligases (By similarity).</text>
</comment>
<comment type="PTM">
    <text evidence="1">Specific enzymatic cleavages by the viral protease yield mature proteins. The polyprotein is cleaved during and after budding, this process is termed maturation (By similarity).</text>
</comment>
<comment type="miscellaneous">
    <molecule>Isoform Gag polyprotein</molecule>
    <text>Produced by conventional translation.</text>
</comment>
<dbReference type="EMBL" id="DQ462191">
    <property type="protein sequence ID" value="ABF18959.1"/>
    <property type="molecule type" value="Genomic_DNA"/>
</dbReference>
<dbReference type="SMR" id="Q09T00"/>
<dbReference type="Proteomes" id="UP000007684">
    <property type="component" value="Genome"/>
</dbReference>
<dbReference type="GO" id="GO:0019013">
    <property type="term" value="C:viral nucleocapsid"/>
    <property type="evidence" value="ECO:0007669"/>
    <property type="project" value="UniProtKB-KW"/>
</dbReference>
<dbReference type="GO" id="GO:0003676">
    <property type="term" value="F:nucleic acid binding"/>
    <property type="evidence" value="ECO:0007669"/>
    <property type="project" value="InterPro"/>
</dbReference>
<dbReference type="GO" id="GO:0005198">
    <property type="term" value="F:structural molecule activity"/>
    <property type="evidence" value="ECO:0007669"/>
    <property type="project" value="InterPro"/>
</dbReference>
<dbReference type="GO" id="GO:0008270">
    <property type="term" value="F:zinc ion binding"/>
    <property type="evidence" value="ECO:0007669"/>
    <property type="project" value="UniProtKB-KW"/>
</dbReference>
<dbReference type="GO" id="GO:0075523">
    <property type="term" value="P:viral translational frameshifting"/>
    <property type="evidence" value="ECO:0007669"/>
    <property type="project" value="UniProtKB-KW"/>
</dbReference>
<dbReference type="Gene3D" id="1.10.1200.30">
    <property type="match status" value="1"/>
</dbReference>
<dbReference type="Gene3D" id="1.10.185.10">
    <property type="entry name" value="Delta-retroviral matrix"/>
    <property type="match status" value="1"/>
</dbReference>
<dbReference type="Gene3D" id="1.10.375.10">
    <property type="entry name" value="Human Immunodeficiency Virus Type 1 Capsid Protein"/>
    <property type="match status" value="1"/>
</dbReference>
<dbReference type="Gene3D" id="4.10.60.10">
    <property type="entry name" value="Zinc finger, CCHC-type"/>
    <property type="match status" value="1"/>
</dbReference>
<dbReference type="InterPro" id="IPR003139">
    <property type="entry name" value="D_retro_matrix"/>
</dbReference>
<dbReference type="InterPro" id="IPR045345">
    <property type="entry name" value="Gag_p24_C"/>
</dbReference>
<dbReference type="InterPro" id="IPR050195">
    <property type="entry name" value="Primate_lentivir_Gag_pol-like"/>
</dbReference>
<dbReference type="InterPro" id="IPR008916">
    <property type="entry name" value="Retrov_capsid_C"/>
</dbReference>
<dbReference type="InterPro" id="IPR008919">
    <property type="entry name" value="Retrov_capsid_N"/>
</dbReference>
<dbReference type="InterPro" id="IPR010999">
    <property type="entry name" value="Retrovr_matrix"/>
</dbReference>
<dbReference type="InterPro" id="IPR001878">
    <property type="entry name" value="Znf_CCHC"/>
</dbReference>
<dbReference type="InterPro" id="IPR036875">
    <property type="entry name" value="Znf_CCHC_sf"/>
</dbReference>
<dbReference type="PANTHER" id="PTHR40389">
    <property type="entry name" value="ENDOGENOUS RETROVIRUS GROUP K MEMBER 24 GAG POLYPROTEIN-RELATED"/>
    <property type="match status" value="1"/>
</dbReference>
<dbReference type="PANTHER" id="PTHR40389:SF3">
    <property type="entry name" value="IGE-BINDING PROTEIN"/>
    <property type="match status" value="1"/>
</dbReference>
<dbReference type="Pfam" id="PF02228">
    <property type="entry name" value="Gag_p19"/>
    <property type="match status" value="1"/>
</dbReference>
<dbReference type="Pfam" id="PF00607">
    <property type="entry name" value="Gag_p24"/>
    <property type="match status" value="1"/>
</dbReference>
<dbReference type="Pfam" id="PF19317">
    <property type="entry name" value="Gag_p24_C"/>
    <property type="match status" value="1"/>
</dbReference>
<dbReference type="Pfam" id="PF00098">
    <property type="entry name" value="zf-CCHC"/>
    <property type="match status" value="1"/>
</dbReference>
<dbReference type="SMART" id="SM00343">
    <property type="entry name" value="ZnF_C2HC"/>
    <property type="match status" value="2"/>
</dbReference>
<dbReference type="SUPFAM" id="SSF47836">
    <property type="entry name" value="Retroviral matrix proteins"/>
    <property type="match status" value="1"/>
</dbReference>
<dbReference type="SUPFAM" id="SSF47353">
    <property type="entry name" value="Retrovirus capsid dimerization domain-like"/>
    <property type="match status" value="1"/>
</dbReference>
<dbReference type="SUPFAM" id="SSF47943">
    <property type="entry name" value="Retrovirus capsid protein, N-terminal core domain"/>
    <property type="match status" value="1"/>
</dbReference>
<dbReference type="SUPFAM" id="SSF57756">
    <property type="entry name" value="Retrovirus zinc finger-like domains"/>
    <property type="match status" value="1"/>
</dbReference>
<dbReference type="PROSITE" id="PS50158">
    <property type="entry name" value="ZF_CCHC"/>
    <property type="match status" value="1"/>
</dbReference>
<gene>
    <name type="primary">gag</name>
</gene>
<organismHost>
    <name type="scientific">Homo sapiens</name>
    <name type="common">Human</name>
    <dbReference type="NCBI Taxonomy" id="9606"/>
</organismHost>
<feature type="initiator methionine" description="Removed; by host" evidence="1">
    <location>
        <position position="1"/>
    </location>
</feature>
<feature type="chain" id="PRO_0000260469" description="Matrix protein p19" evidence="1">
    <location>
        <begin position="2"/>
        <end position="123"/>
    </location>
</feature>
<feature type="chain" id="PRO_0000260470" description="Capsid protein p24" evidence="1">
    <location>
        <begin position="124"/>
        <end position="337"/>
    </location>
</feature>
<feature type="chain" id="PRO_0000260471" description="Nucleocapsid protein p15-gag" evidence="1">
    <location>
        <begin position="338"/>
        <end position="422"/>
    </location>
</feature>
<feature type="zinc finger region" description="CCHC-type 1" evidence="2">
    <location>
        <begin position="349"/>
        <end position="366"/>
    </location>
</feature>
<feature type="zinc finger region" description="CCHC-type 2" evidence="2">
    <location>
        <begin position="372"/>
        <end position="389"/>
    </location>
</feature>
<feature type="region of interest" description="Disordered" evidence="3">
    <location>
        <begin position="93"/>
        <end position="117"/>
    </location>
</feature>
<feature type="short sequence motif" description="PTAP/PSAP motif">
    <location>
        <begin position="98"/>
        <end position="101"/>
    </location>
</feature>
<feature type="short sequence motif" description="PPXY motif">
    <location>
        <begin position="109"/>
        <end position="112"/>
    </location>
</feature>
<feature type="compositionally biased region" description="Pro residues" evidence="3">
    <location>
        <begin position="98"/>
        <end position="113"/>
    </location>
</feature>
<feature type="site" description="Cleavage; by viral protease" evidence="1">
    <location>
        <begin position="123"/>
        <end position="124"/>
    </location>
</feature>
<feature type="site" description="Cleavage; by viral protease" evidence="1">
    <location>
        <begin position="337"/>
        <end position="338"/>
    </location>
</feature>
<feature type="lipid moiety-binding region" description="N-myristoyl glycine; by host" evidence="1">
    <location>
        <position position="2"/>
    </location>
</feature>
<sequence>MGKTYSSPVNPIPKAPKGLAIHHWLNFLQAAYRLQPGPSEFDFHQLRKFLKLAIKTPVWLNPINYSVLARLIPKNYPGRVHEIVAILIQETPAREAPPSAPPADDPQKPPPYPEHAQVEPQCLPVLHPHGAPATHRPWQMKDLQAIKQEVSSSAPGSPQFMQTVRLAVQQFDPTAKDLHDLLQYLCSSLVASLHHQQLETLIAQAETQGITGYNPLAGPLRVQANNPNQQGLRREYQNLWLSAFSALPGNTKDPTWAAILQGPEEPFCSFVERLNVALDNGLPEGTPKDPILRSLAYSNANKECQKLLQARGQTNSPLGEMLRACQTWTPRDKNKILMIQPKKTPPPNQPCFRCGQAGHWSRDCKQPRPPPGPCPLCQDPAHWKQDCPQLKADTKGSEDLLLDLPCEASHVRERKNSSGGED</sequence>
<organism>
    <name type="scientific">Human T-cell leukemia virus 3 (strain Pyl43)</name>
    <name type="common">HTLV-3</name>
    <dbReference type="NCBI Taxonomy" id="406769"/>
    <lineage>
        <taxon>Viruses</taxon>
        <taxon>Riboviria</taxon>
        <taxon>Pararnavirae</taxon>
        <taxon>Artverviricota</taxon>
        <taxon>Revtraviricetes</taxon>
        <taxon>Ortervirales</taxon>
        <taxon>Retroviridae</taxon>
        <taxon>Orthoretrovirinae</taxon>
        <taxon>Deltaretrovirus</taxon>
        <taxon>Primate T-lymphotropic virus 3</taxon>
    </lineage>
</organism>
<name>GAG_HTL3P</name>
<evidence type="ECO:0000250" key="1"/>
<evidence type="ECO:0000255" key="2">
    <source>
        <dbReference type="PROSITE-ProRule" id="PRU00047"/>
    </source>
</evidence>
<evidence type="ECO:0000256" key="3">
    <source>
        <dbReference type="SAM" id="MobiDB-lite"/>
    </source>
</evidence>
<evidence type="ECO:0000305" key="4"/>
<protein>
    <recommendedName>
        <fullName>Gag polyprotein</fullName>
    </recommendedName>
    <alternativeName>
        <fullName>Pr53Gag</fullName>
    </alternativeName>
    <component>
        <recommendedName>
            <fullName>Matrix protein p19</fullName>
            <shortName>MA</shortName>
        </recommendedName>
    </component>
    <component>
        <recommendedName>
            <fullName>Capsid protein p24</fullName>
            <shortName>CA</shortName>
        </recommendedName>
    </component>
    <component>
        <recommendedName>
            <fullName>Nucleocapsid protein p15-gag</fullName>
            <shortName>NC-gag</shortName>
        </recommendedName>
    </component>
</protein>